<evidence type="ECO:0000250" key="1"/>
<evidence type="ECO:0000250" key="2">
    <source>
        <dbReference type="UniProtKB" id="P46995"/>
    </source>
</evidence>
<evidence type="ECO:0000255" key="3">
    <source>
        <dbReference type="PROSITE-ProRule" id="PRU00155"/>
    </source>
</evidence>
<evidence type="ECO:0000255" key="4">
    <source>
        <dbReference type="PROSITE-ProRule" id="PRU00190"/>
    </source>
</evidence>
<evidence type="ECO:0000255" key="5">
    <source>
        <dbReference type="PROSITE-ProRule" id="PRU00224"/>
    </source>
</evidence>
<evidence type="ECO:0000255" key="6">
    <source>
        <dbReference type="PROSITE-ProRule" id="PRU00562"/>
    </source>
</evidence>
<evidence type="ECO:0000255" key="7">
    <source>
        <dbReference type="PROSITE-ProRule" id="PRU00901"/>
    </source>
</evidence>
<evidence type="ECO:0000256" key="8">
    <source>
        <dbReference type="SAM" id="MobiDB-lite"/>
    </source>
</evidence>
<feature type="chain" id="PRO_0000269794" description="Histone-lysine N-methyltransferase, H3 lysine-36 specific">
    <location>
        <begin position="1"/>
        <end position="768"/>
    </location>
</feature>
<feature type="domain" description="AWS" evidence="6">
    <location>
        <begin position="45"/>
        <end position="90"/>
    </location>
</feature>
<feature type="domain" description="SET" evidence="4">
    <location>
        <begin position="92"/>
        <end position="209"/>
    </location>
</feature>
<feature type="domain" description="Post-SET" evidence="3">
    <location>
        <begin position="216"/>
        <end position="232"/>
    </location>
</feature>
<feature type="domain" description="WW" evidence="5">
    <location>
        <begin position="501"/>
        <end position="534"/>
    </location>
</feature>
<feature type="region of interest" description="Disordered" evidence="8">
    <location>
        <begin position="411"/>
        <end position="508"/>
    </location>
</feature>
<feature type="region of interest" description="Disordered" evidence="8">
    <location>
        <begin position="533"/>
        <end position="610"/>
    </location>
</feature>
<feature type="region of interest" description="Disordered" evidence="8">
    <location>
        <begin position="680"/>
        <end position="768"/>
    </location>
</feature>
<feature type="compositionally biased region" description="Basic and acidic residues" evidence="8">
    <location>
        <begin position="411"/>
        <end position="452"/>
    </location>
</feature>
<feature type="compositionally biased region" description="Polar residues" evidence="8">
    <location>
        <begin position="453"/>
        <end position="469"/>
    </location>
</feature>
<feature type="compositionally biased region" description="Basic and acidic residues" evidence="8">
    <location>
        <begin position="555"/>
        <end position="568"/>
    </location>
</feature>
<feature type="compositionally biased region" description="Basic and acidic residues" evidence="8">
    <location>
        <begin position="682"/>
        <end position="734"/>
    </location>
</feature>
<feature type="compositionally biased region" description="Basic and acidic residues" evidence="8">
    <location>
        <begin position="755"/>
        <end position="768"/>
    </location>
</feature>
<proteinExistence type="inferred from homology"/>
<sequence length="768" mass="85679">MSGNNSPINAQLFPDARDVTKDALQTFVELPECTYMKGLGSSQQAEVMACDCKPGPTACDEDSGCINRLTSIECVRCCKGCQNKRFQGKKYASVDVISTEKKGFGLRATKDIAAGEFVYEYVGEVIDEPTFKERTAIYTTQGVKHFYFMMLQKGEFIDATAKGGLGRFCNHSCAPNGHVEKWVVGKRLRMGIFASRHIQRGEEVTFDYNVDRYGAEAQACYCGEKNCVGFLGGKTQTESASKVSGTLTAALGLTSRDINAILRGKKSAEDLRPRDLTVQDVSKVMASLMMNQEAWQVNLMLQRIALCTDTSVQAAVMKMHGYQIFAQILTATWGDNPLGLDDSDRVNVTLMLLRVLQKWPRITKNKISSSQIENVVKSLTSNDNSDIATIAQELLSEWANLKMAFRIPRRKIDPDGDEHSVSRGTSEEVTKESSKSEEPNDVEVVKVNKKADNNGNGVTDSPSTRSESPFTFIPTPYSNKTAPKGPKKAVKQPASPMVPPRSLPKGWQFANDPQGKVYYYNLELNIQQWDFPKASRASSPSTPKGPKGPKGPRGNRRDERRDNSETREPLSLQSQRESDLQRIIEQARLQEVKNNSEPAPSASAKPVNAQAHRLTKLLAKVVPNQVSKYDVDRERAKKCSKDIVQILVDKELKRPEPMTEISDEKAKKIKEFVKGYMGKVVKRLEEKEGGAKDFGRGRQGNRRDSERQSDRRGRQGQSDRDHSDNHGRKRKGEENQPYEAGPMYDDESAETSTETVKKPKVDMEIDLE</sequence>
<protein>
    <recommendedName>
        <fullName>Histone-lysine N-methyltransferase, H3 lysine-36 specific</fullName>
        <ecNumber evidence="2">2.1.1.359</ecNumber>
    </recommendedName>
    <alternativeName>
        <fullName>SET domain-containing protein 2</fullName>
    </alternativeName>
</protein>
<keyword id="KW-0158">Chromosome</keyword>
<keyword id="KW-0489">Methyltransferase</keyword>
<keyword id="KW-0539">Nucleus</keyword>
<keyword id="KW-1185">Reference proteome</keyword>
<keyword id="KW-0678">Repressor</keyword>
<keyword id="KW-0949">S-adenosyl-L-methionine</keyword>
<keyword id="KW-0804">Transcription</keyword>
<keyword id="KW-0805">Transcription regulation</keyword>
<keyword id="KW-0808">Transferase</keyword>
<dbReference type="EC" id="2.1.1.359" evidence="2"/>
<dbReference type="EMBL" id="CR382131">
    <property type="protein sequence ID" value="CAG79692.1"/>
    <property type="molecule type" value="Genomic_DNA"/>
</dbReference>
<dbReference type="RefSeq" id="XP_504097.1">
    <property type="nucleotide sequence ID" value="XM_504097.1"/>
</dbReference>
<dbReference type="SMR" id="Q6C5G5"/>
<dbReference type="FunCoup" id="Q6C5G5">
    <property type="interactions" value="135"/>
</dbReference>
<dbReference type="STRING" id="284591.Q6C5G5"/>
<dbReference type="EnsemblFungi" id="CAG79692">
    <property type="protein sequence ID" value="CAG79692"/>
    <property type="gene ID" value="YALI0_E18260g"/>
</dbReference>
<dbReference type="KEGG" id="yli:2911710"/>
<dbReference type="VEuPathDB" id="FungiDB:YALI0_E18260g"/>
<dbReference type="HOGENOM" id="CLU_008492_1_1_1"/>
<dbReference type="InParanoid" id="Q6C5G5"/>
<dbReference type="OMA" id="INVLARW"/>
<dbReference type="OrthoDB" id="117273at4891"/>
<dbReference type="Proteomes" id="UP000001300">
    <property type="component" value="Chromosome E"/>
</dbReference>
<dbReference type="GO" id="GO:0000785">
    <property type="term" value="C:chromatin"/>
    <property type="evidence" value="ECO:0000318"/>
    <property type="project" value="GO_Central"/>
</dbReference>
<dbReference type="GO" id="GO:0005829">
    <property type="term" value="C:cytosol"/>
    <property type="evidence" value="ECO:0007669"/>
    <property type="project" value="EnsemblFungi"/>
</dbReference>
<dbReference type="GO" id="GO:0005634">
    <property type="term" value="C:nucleus"/>
    <property type="evidence" value="ECO:0000318"/>
    <property type="project" value="GO_Central"/>
</dbReference>
<dbReference type="GO" id="GO:0046975">
    <property type="term" value="F:histone H3K36 methyltransferase activity"/>
    <property type="evidence" value="ECO:0000318"/>
    <property type="project" value="GO_Central"/>
</dbReference>
<dbReference type="GO" id="GO:0140955">
    <property type="term" value="F:histone H3K36 trimethyltransferase activity"/>
    <property type="evidence" value="ECO:0007669"/>
    <property type="project" value="UniProtKB-EC"/>
</dbReference>
<dbReference type="GO" id="GO:0003723">
    <property type="term" value="F:RNA binding"/>
    <property type="evidence" value="ECO:0007669"/>
    <property type="project" value="EnsemblFungi"/>
</dbReference>
<dbReference type="GO" id="GO:0030437">
    <property type="term" value="P:ascospore formation"/>
    <property type="evidence" value="ECO:0007669"/>
    <property type="project" value="EnsemblFungi"/>
</dbReference>
<dbReference type="GO" id="GO:0006354">
    <property type="term" value="P:DNA-templated transcription elongation"/>
    <property type="evidence" value="ECO:0007669"/>
    <property type="project" value="EnsemblFungi"/>
</dbReference>
<dbReference type="GO" id="GO:0006353">
    <property type="term" value="P:DNA-templated transcription termination"/>
    <property type="evidence" value="ECO:0007669"/>
    <property type="project" value="EnsemblFungi"/>
</dbReference>
<dbReference type="GO" id="GO:0032259">
    <property type="term" value="P:methylation"/>
    <property type="evidence" value="ECO:0007669"/>
    <property type="project" value="UniProtKB-KW"/>
</dbReference>
<dbReference type="GO" id="GO:0060195">
    <property type="term" value="P:negative regulation of antisense RNA transcription"/>
    <property type="evidence" value="ECO:0007669"/>
    <property type="project" value="EnsemblFungi"/>
</dbReference>
<dbReference type="GO" id="GO:0045128">
    <property type="term" value="P:negative regulation of reciprocal meiotic recombination"/>
    <property type="evidence" value="ECO:0007669"/>
    <property type="project" value="EnsemblFungi"/>
</dbReference>
<dbReference type="GO" id="GO:0030174">
    <property type="term" value="P:regulation of DNA-templated DNA replication initiation"/>
    <property type="evidence" value="ECO:0007669"/>
    <property type="project" value="EnsemblFungi"/>
</dbReference>
<dbReference type="GO" id="GO:0006355">
    <property type="term" value="P:regulation of DNA-templated transcription"/>
    <property type="evidence" value="ECO:0000318"/>
    <property type="project" value="GO_Central"/>
</dbReference>
<dbReference type="GO" id="GO:0009302">
    <property type="term" value="P:sno(s)RNA transcription"/>
    <property type="evidence" value="ECO:0007669"/>
    <property type="project" value="EnsemblFungi"/>
</dbReference>
<dbReference type="GO" id="GO:0006283">
    <property type="term" value="P:transcription-coupled nucleotide-excision repair"/>
    <property type="evidence" value="ECO:0007669"/>
    <property type="project" value="EnsemblFungi"/>
</dbReference>
<dbReference type="CDD" id="cd19172">
    <property type="entry name" value="SET_SETD2"/>
    <property type="match status" value="1"/>
</dbReference>
<dbReference type="CDD" id="cd00201">
    <property type="entry name" value="WW"/>
    <property type="match status" value="1"/>
</dbReference>
<dbReference type="Gene3D" id="2.20.70.10">
    <property type="match status" value="1"/>
</dbReference>
<dbReference type="Gene3D" id="1.20.930.10">
    <property type="entry name" value="Conserved domain common to transcription factors TFIIS, elongin A, CRSP70"/>
    <property type="match status" value="1"/>
</dbReference>
<dbReference type="Gene3D" id="2.170.270.10">
    <property type="entry name" value="SET domain"/>
    <property type="match status" value="1"/>
</dbReference>
<dbReference type="Gene3D" id="1.10.1740.100">
    <property type="entry name" value="Set2, Rpb1 interacting domain"/>
    <property type="match status" value="1"/>
</dbReference>
<dbReference type="InterPro" id="IPR006560">
    <property type="entry name" value="AWS_dom"/>
</dbReference>
<dbReference type="InterPro" id="IPR003616">
    <property type="entry name" value="Post-SET_dom"/>
</dbReference>
<dbReference type="InterPro" id="IPR025788">
    <property type="entry name" value="Set2_fungi"/>
</dbReference>
<dbReference type="InterPro" id="IPR050777">
    <property type="entry name" value="SET2_Histone-Lys_MeTrsfase"/>
</dbReference>
<dbReference type="InterPro" id="IPR001214">
    <property type="entry name" value="SET_dom"/>
</dbReference>
<dbReference type="InterPro" id="IPR046341">
    <property type="entry name" value="SET_dom_sf"/>
</dbReference>
<dbReference type="InterPro" id="IPR044437">
    <property type="entry name" value="SETD2/Set2_SET"/>
</dbReference>
<dbReference type="InterPro" id="IPR013257">
    <property type="entry name" value="SRI"/>
</dbReference>
<dbReference type="InterPro" id="IPR038190">
    <property type="entry name" value="SRI_sf"/>
</dbReference>
<dbReference type="InterPro" id="IPR035441">
    <property type="entry name" value="TFIIS/LEDGF_dom_sf"/>
</dbReference>
<dbReference type="InterPro" id="IPR017923">
    <property type="entry name" value="TFIIS_N"/>
</dbReference>
<dbReference type="InterPro" id="IPR001202">
    <property type="entry name" value="WW_dom"/>
</dbReference>
<dbReference type="InterPro" id="IPR036020">
    <property type="entry name" value="WW_dom_sf"/>
</dbReference>
<dbReference type="PANTHER" id="PTHR22884">
    <property type="entry name" value="SET DOMAIN PROTEINS"/>
    <property type="match status" value="1"/>
</dbReference>
<dbReference type="Pfam" id="PF17907">
    <property type="entry name" value="AWS"/>
    <property type="match status" value="1"/>
</dbReference>
<dbReference type="Pfam" id="PF08711">
    <property type="entry name" value="Med26"/>
    <property type="match status" value="1"/>
</dbReference>
<dbReference type="Pfam" id="PF00856">
    <property type="entry name" value="SET"/>
    <property type="match status" value="1"/>
</dbReference>
<dbReference type="Pfam" id="PF08236">
    <property type="entry name" value="SRI"/>
    <property type="match status" value="1"/>
</dbReference>
<dbReference type="Pfam" id="PF00397">
    <property type="entry name" value="WW"/>
    <property type="match status" value="1"/>
</dbReference>
<dbReference type="SMART" id="SM00570">
    <property type="entry name" value="AWS"/>
    <property type="match status" value="1"/>
</dbReference>
<dbReference type="SMART" id="SM00508">
    <property type="entry name" value="PostSET"/>
    <property type="match status" value="1"/>
</dbReference>
<dbReference type="SMART" id="SM00317">
    <property type="entry name" value="SET"/>
    <property type="match status" value="1"/>
</dbReference>
<dbReference type="SMART" id="SM00456">
    <property type="entry name" value="WW"/>
    <property type="match status" value="1"/>
</dbReference>
<dbReference type="SUPFAM" id="SSF47676">
    <property type="entry name" value="Conserved domain common to transcription factors TFIIS, elongin A, CRSP70"/>
    <property type="match status" value="1"/>
</dbReference>
<dbReference type="SUPFAM" id="SSF82199">
    <property type="entry name" value="SET domain"/>
    <property type="match status" value="1"/>
</dbReference>
<dbReference type="SUPFAM" id="SSF51045">
    <property type="entry name" value="WW domain"/>
    <property type="match status" value="1"/>
</dbReference>
<dbReference type="PROSITE" id="PS51215">
    <property type="entry name" value="AWS"/>
    <property type="match status" value="1"/>
</dbReference>
<dbReference type="PROSITE" id="PS50868">
    <property type="entry name" value="POST_SET"/>
    <property type="match status" value="1"/>
</dbReference>
<dbReference type="PROSITE" id="PS51568">
    <property type="entry name" value="SAM_MT43_SET2_1"/>
    <property type="match status" value="1"/>
</dbReference>
<dbReference type="PROSITE" id="PS50280">
    <property type="entry name" value="SET"/>
    <property type="match status" value="1"/>
</dbReference>
<dbReference type="PROSITE" id="PS50020">
    <property type="entry name" value="WW_DOMAIN_2"/>
    <property type="match status" value="1"/>
</dbReference>
<reference key="1">
    <citation type="journal article" date="2004" name="Nature">
        <title>Genome evolution in yeasts.</title>
        <authorList>
            <person name="Dujon B."/>
            <person name="Sherman D."/>
            <person name="Fischer G."/>
            <person name="Durrens P."/>
            <person name="Casaregola S."/>
            <person name="Lafontaine I."/>
            <person name="de Montigny J."/>
            <person name="Marck C."/>
            <person name="Neuveglise C."/>
            <person name="Talla E."/>
            <person name="Goffard N."/>
            <person name="Frangeul L."/>
            <person name="Aigle M."/>
            <person name="Anthouard V."/>
            <person name="Babour A."/>
            <person name="Barbe V."/>
            <person name="Barnay S."/>
            <person name="Blanchin S."/>
            <person name="Beckerich J.-M."/>
            <person name="Beyne E."/>
            <person name="Bleykasten C."/>
            <person name="Boisrame A."/>
            <person name="Boyer J."/>
            <person name="Cattolico L."/>
            <person name="Confanioleri F."/>
            <person name="de Daruvar A."/>
            <person name="Despons L."/>
            <person name="Fabre E."/>
            <person name="Fairhead C."/>
            <person name="Ferry-Dumazet H."/>
            <person name="Groppi A."/>
            <person name="Hantraye F."/>
            <person name="Hennequin C."/>
            <person name="Jauniaux N."/>
            <person name="Joyet P."/>
            <person name="Kachouri R."/>
            <person name="Kerrest A."/>
            <person name="Koszul R."/>
            <person name="Lemaire M."/>
            <person name="Lesur I."/>
            <person name="Ma L."/>
            <person name="Muller H."/>
            <person name="Nicaud J.-M."/>
            <person name="Nikolski M."/>
            <person name="Oztas S."/>
            <person name="Ozier-Kalogeropoulos O."/>
            <person name="Pellenz S."/>
            <person name="Potier S."/>
            <person name="Richard G.-F."/>
            <person name="Straub M.-L."/>
            <person name="Suleau A."/>
            <person name="Swennen D."/>
            <person name="Tekaia F."/>
            <person name="Wesolowski-Louvel M."/>
            <person name="Westhof E."/>
            <person name="Wirth B."/>
            <person name="Zeniou-Meyer M."/>
            <person name="Zivanovic Y."/>
            <person name="Bolotin-Fukuhara M."/>
            <person name="Thierry A."/>
            <person name="Bouchier C."/>
            <person name="Caudron B."/>
            <person name="Scarpelli C."/>
            <person name="Gaillardin C."/>
            <person name="Weissenbach J."/>
            <person name="Wincker P."/>
            <person name="Souciet J.-L."/>
        </authorList>
    </citation>
    <scope>NUCLEOTIDE SEQUENCE [LARGE SCALE GENOMIC DNA]</scope>
    <source>
        <strain>CLIB 122 / E 150</strain>
    </source>
</reference>
<gene>
    <name type="primary">set-2</name>
    <name type="ordered locus">YALI0E18260g</name>
</gene>
<accession>Q6C5G5</accession>
<name>SET2_YARLI</name>
<organism>
    <name type="scientific">Yarrowia lipolytica (strain CLIB 122 / E 150)</name>
    <name type="common">Yeast</name>
    <name type="synonym">Candida lipolytica</name>
    <dbReference type="NCBI Taxonomy" id="284591"/>
    <lineage>
        <taxon>Eukaryota</taxon>
        <taxon>Fungi</taxon>
        <taxon>Dikarya</taxon>
        <taxon>Ascomycota</taxon>
        <taxon>Saccharomycotina</taxon>
        <taxon>Dipodascomycetes</taxon>
        <taxon>Dipodascales</taxon>
        <taxon>Dipodascales incertae sedis</taxon>
        <taxon>Yarrowia</taxon>
    </lineage>
</organism>
<comment type="function">
    <text evidence="2">Histone methyltransferase that trimethylates histone H3 'Lys-36' forming H3K36me3. Involved in transcription elongation as well as in transcription repression.</text>
</comment>
<comment type="catalytic activity">
    <reaction evidence="2 7">
        <text>L-lysyl(36)-[histone H3] + 3 S-adenosyl-L-methionine = N(6),N(6),N(6)-trimethyl-L-lysyl(36)-[histone H3] + 3 S-adenosyl-L-homocysteine + 3 H(+)</text>
        <dbReference type="Rhea" id="RHEA:60324"/>
        <dbReference type="Rhea" id="RHEA-COMP:9785"/>
        <dbReference type="Rhea" id="RHEA-COMP:15536"/>
        <dbReference type="ChEBI" id="CHEBI:15378"/>
        <dbReference type="ChEBI" id="CHEBI:29969"/>
        <dbReference type="ChEBI" id="CHEBI:57856"/>
        <dbReference type="ChEBI" id="CHEBI:59789"/>
        <dbReference type="ChEBI" id="CHEBI:61961"/>
        <dbReference type="EC" id="2.1.1.359"/>
    </reaction>
</comment>
<comment type="subcellular location">
    <subcellularLocation>
        <location evidence="1">Nucleus</location>
    </subcellularLocation>
    <subcellularLocation>
        <location evidence="1">Chromosome</location>
    </subcellularLocation>
</comment>
<comment type="domain">
    <text evidence="1">The AWS and SET domains are necessary for transcription repression.</text>
</comment>
<comment type="similarity">
    <text evidence="7">Belongs to the class V-like SAM-binding methyltransferase superfamily. Histone-lysine methyltransferase family. SET2 subfamily.</text>
</comment>